<dbReference type="EMBL" id="CP000029">
    <property type="protein sequence ID" value="AAW54174.1"/>
    <property type="molecule type" value="Genomic_DNA"/>
</dbReference>
<dbReference type="RefSeq" id="WP_002439506.1">
    <property type="nucleotide sequence ID" value="NC_002976.3"/>
</dbReference>
<dbReference type="SMR" id="Q5HPT7"/>
<dbReference type="STRING" id="176279.SERP0821"/>
<dbReference type="GeneID" id="50018933"/>
<dbReference type="KEGG" id="ser:SERP0821"/>
<dbReference type="eggNOG" id="COG4465">
    <property type="taxonomic scope" value="Bacteria"/>
</dbReference>
<dbReference type="HOGENOM" id="CLU_089581_0_0_9"/>
<dbReference type="Proteomes" id="UP000000531">
    <property type="component" value="Chromosome"/>
</dbReference>
<dbReference type="GO" id="GO:0005737">
    <property type="term" value="C:cytoplasm"/>
    <property type="evidence" value="ECO:0007669"/>
    <property type="project" value="UniProtKB-SubCell"/>
</dbReference>
<dbReference type="GO" id="GO:0003677">
    <property type="term" value="F:DNA binding"/>
    <property type="evidence" value="ECO:0007669"/>
    <property type="project" value="UniProtKB-UniRule"/>
</dbReference>
<dbReference type="GO" id="GO:0003700">
    <property type="term" value="F:DNA-binding transcription factor activity"/>
    <property type="evidence" value="ECO:0007669"/>
    <property type="project" value="InterPro"/>
</dbReference>
<dbReference type="GO" id="GO:0005525">
    <property type="term" value="F:GTP binding"/>
    <property type="evidence" value="ECO:0007669"/>
    <property type="project" value="InterPro"/>
</dbReference>
<dbReference type="GO" id="GO:0045892">
    <property type="term" value="P:negative regulation of DNA-templated transcription"/>
    <property type="evidence" value="ECO:0007669"/>
    <property type="project" value="UniProtKB-UniRule"/>
</dbReference>
<dbReference type="FunFam" id="1.10.10.10:FF:000034">
    <property type="entry name" value="GTP-sensing transcriptional pleiotropic repressor CodY"/>
    <property type="match status" value="1"/>
</dbReference>
<dbReference type="FunFam" id="3.30.450.40:FF:000003">
    <property type="entry name" value="GTP-sensing transcriptional pleiotropic repressor CodY"/>
    <property type="match status" value="1"/>
</dbReference>
<dbReference type="Gene3D" id="3.30.450.40">
    <property type="match status" value="1"/>
</dbReference>
<dbReference type="Gene3D" id="1.10.10.10">
    <property type="entry name" value="Winged helix-like DNA-binding domain superfamily/Winged helix DNA-binding domain"/>
    <property type="match status" value="1"/>
</dbReference>
<dbReference type="HAMAP" id="MF_00621">
    <property type="entry name" value="HTH_type_CodY"/>
    <property type="match status" value="1"/>
</dbReference>
<dbReference type="InterPro" id="IPR014154">
    <property type="entry name" value="CodY"/>
</dbReference>
<dbReference type="InterPro" id="IPR029016">
    <property type="entry name" value="GAF-like_dom_sf"/>
</dbReference>
<dbReference type="InterPro" id="IPR013198">
    <property type="entry name" value="GTP_trans_reg_CodY_C"/>
</dbReference>
<dbReference type="InterPro" id="IPR010312">
    <property type="entry name" value="Transc_reg_CodY_N"/>
</dbReference>
<dbReference type="InterPro" id="IPR036388">
    <property type="entry name" value="WH-like_DNA-bd_sf"/>
</dbReference>
<dbReference type="InterPro" id="IPR036390">
    <property type="entry name" value="WH_DNA-bd_sf"/>
</dbReference>
<dbReference type="NCBIfam" id="TIGR02787">
    <property type="entry name" value="codY_Gpos"/>
    <property type="match status" value="1"/>
</dbReference>
<dbReference type="NCBIfam" id="NF003170">
    <property type="entry name" value="PRK04158.1"/>
    <property type="match status" value="1"/>
</dbReference>
<dbReference type="PANTHER" id="PTHR40062:SF1">
    <property type="entry name" value="GLOBAL TRANSCRIPTIONAL REGULATOR CODY"/>
    <property type="match status" value="1"/>
</dbReference>
<dbReference type="PANTHER" id="PTHR40062">
    <property type="entry name" value="GTP-SENSING TRANSCRIPTIONAL PLEIOTROPIC REPRESSOR CODY"/>
    <property type="match status" value="1"/>
</dbReference>
<dbReference type="Pfam" id="PF06018">
    <property type="entry name" value="CodY"/>
    <property type="match status" value="1"/>
</dbReference>
<dbReference type="Pfam" id="PF08222">
    <property type="entry name" value="HTH_CodY"/>
    <property type="match status" value="1"/>
</dbReference>
<dbReference type="PIRSF" id="PIRSF011572">
    <property type="entry name" value="GTP_sensing_CodY"/>
    <property type="match status" value="1"/>
</dbReference>
<dbReference type="SUPFAM" id="SSF46785">
    <property type="entry name" value="Winged helix' DNA-binding domain"/>
    <property type="match status" value="1"/>
</dbReference>
<gene>
    <name evidence="1" type="primary">codY</name>
    <name type="ordered locus">SERP0821</name>
</gene>
<organism>
    <name type="scientific">Staphylococcus epidermidis (strain ATCC 35984 / DSM 28319 / BCRC 17069 / CCUG 31568 / BM 3577 / RP62A)</name>
    <dbReference type="NCBI Taxonomy" id="176279"/>
    <lineage>
        <taxon>Bacteria</taxon>
        <taxon>Bacillati</taxon>
        <taxon>Bacillota</taxon>
        <taxon>Bacilli</taxon>
        <taxon>Bacillales</taxon>
        <taxon>Staphylococcaceae</taxon>
        <taxon>Staphylococcus</taxon>
    </lineage>
</organism>
<reference key="1">
    <citation type="journal article" date="2005" name="J. Bacteriol.">
        <title>Insights on evolution of virulence and resistance from the complete genome analysis of an early methicillin-resistant Staphylococcus aureus strain and a biofilm-producing methicillin-resistant Staphylococcus epidermidis strain.</title>
        <authorList>
            <person name="Gill S.R."/>
            <person name="Fouts D.E."/>
            <person name="Archer G.L."/>
            <person name="Mongodin E.F."/>
            <person name="DeBoy R.T."/>
            <person name="Ravel J."/>
            <person name="Paulsen I.T."/>
            <person name="Kolonay J.F."/>
            <person name="Brinkac L.M."/>
            <person name="Beanan M.J."/>
            <person name="Dodson R.J."/>
            <person name="Daugherty S.C."/>
            <person name="Madupu R."/>
            <person name="Angiuoli S.V."/>
            <person name="Durkin A.S."/>
            <person name="Haft D.H."/>
            <person name="Vamathevan J.J."/>
            <person name="Khouri H."/>
            <person name="Utterback T.R."/>
            <person name="Lee C."/>
            <person name="Dimitrov G."/>
            <person name="Jiang L."/>
            <person name="Qin H."/>
            <person name="Weidman J."/>
            <person name="Tran K."/>
            <person name="Kang K.H."/>
            <person name="Hance I.R."/>
            <person name="Nelson K.E."/>
            <person name="Fraser C.M."/>
        </authorList>
    </citation>
    <scope>NUCLEOTIDE SEQUENCE [LARGE SCALE GENOMIC DNA]</scope>
    <source>
        <strain>ATCC 35984 / DSM 28319 / BCRC 17069 / CCUG 31568 / BM 3577 / RP62A</strain>
    </source>
</reference>
<feature type="chain" id="PRO_0000213238" description="Global transcriptional regulator CodY">
    <location>
        <begin position="1"/>
        <end position="256"/>
    </location>
</feature>
<feature type="DNA-binding region" description="H-T-H motif" evidence="1">
    <location>
        <begin position="203"/>
        <end position="222"/>
    </location>
</feature>
<feature type="region of interest" description="GAF domain" evidence="1">
    <location>
        <begin position="1"/>
        <end position="155"/>
    </location>
</feature>
<evidence type="ECO:0000255" key="1">
    <source>
        <dbReference type="HAMAP-Rule" id="MF_00621"/>
    </source>
</evidence>
<name>CODY_STAEQ</name>
<protein>
    <recommendedName>
        <fullName evidence="1">Global transcriptional regulator CodY</fullName>
    </recommendedName>
</protein>
<accession>Q5HPT7</accession>
<keyword id="KW-0963">Cytoplasm</keyword>
<keyword id="KW-0238">DNA-binding</keyword>
<keyword id="KW-1185">Reference proteome</keyword>
<keyword id="KW-0678">Repressor</keyword>
<keyword id="KW-0804">Transcription</keyword>
<keyword id="KW-0805">Transcription regulation</keyword>
<proteinExistence type="inferred from homology"/>
<sequence>MSLLSKTRELNTLLQKHKGIAVDFKDVAQTISNVTVTNVFIVSRRGKILGSCLNELLKSERIKDMLEDRHIPREYTEELMNVKQTESNIDIDNELTVFPPENREVFLNSRTTIFPILGGGERLGTLVLGRVQDDFNENDLVLGEYAATVIGMEILREKHNEVEKEARDKAAITMAINSLSYSEKEAIEHIFEELGGTEGLLIASKVADRVGITRSVIVNALRKLESAGVIESRSLGMKGTFIKVKKDKFLDELEKK</sequence>
<comment type="function">
    <text evidence="1">DNA-binding global transcriptional regulator which is involved in the adaptive response to starvation and acts by directly or indirectly controlling the expression of numerous genes in response to nutrient availability. During rapid exponential growth, CodY is highly active and represses genes whose products allow adaptation to nutrient depletion.</text>
</comment>
<comment type="subcellular location">
    <subcellularLocation>
        <location evidence="1">Cytoplasm</location>
    </subcellularLocation>
</comment>
<comment type="similarity">
    <text evidence="1">Belongs to the CodY family.</text>
</comment>